<evidence type="ECO:0000255" key="1">
    <source>
        <dbReference type="HAMAP-Rule" id="MF_04088"/>
    </source>
</evidence>
<accession>Q86194</accession>
<organism>
    <name type="scientific">Rotavirus A (strain RVA/Human/Japan/AU-1/1982/G3P3[9])</name>
    <name type="common">RV-A</name>
    <dbReference type="NCBI Taxonomy" id="39013"/>
    <lineage>
        <taxon>Viruses</taxon>
        <taxon>Riboviria</taxon>
        <taxon>Orthornavirae</taxon>
        <taxon>Duplornaviricota</taxon>
        <taxon>Resentoviricetes</taxon>
        <taxon>Reovirales</taxon>
        <taxon>Sedoreoviridae</taxon>
        <taxon>Rotavirus</taxon>
        <taxon>Rotavirus A</taxon>
    </lineage>
</organism>
<dbReference type="EMBL" id="D45244">
    <property type="protein sequence ID" value="BAA08200.1"/>
    <property type="molecule type" value="mRNA"/>
</dbReference>
<dbReference type="Proteomes" id="UP000001454">
    <property type="component" value="Genome"/>
</dbReference>
<dbReference type="GO" id="GO:0030430">
    <property type="term" value="C:host cell cytoplasm"/>
    <property type="evidence" value="ECO:0007669"/>
    <property type="project" value="UniProtKB-UniRule"/>
</dbReference>
<dbReference type="GO" id="GO:0044163">
    <property type="term" value="C:host cytoskeleton"/>
    <property type="evidence" value="ECO:0007669"/>
    <property type="project" value="UniProtKB-SubCell"/>
</dbReference>
<dbReference type="GO" id="GO:0046872">
    <property type="term" value="F:metal ion binding"/>
    <property type="evidence" value="ECO:0007669"/>
    <property type="project" value="UniProtKB-UniRule"/>
</dbReference>
<dbReference type="GO" id="GO:0003723">
    <property type="term" value="F:RNA binding"/>
    <property type="evidence" value="ECO:0007669"/>
    <property type="project" value="UniProtKB-UniRule"/>
</dbReference>
<dbReference type="GO" id="GO:0039548">
    <property type="term" value="P:symbiont-mediated suppression of host cytoplasmic pattern recognition receptor signaling pathway via inhibition of IRF3 activity"/>
    <property type="evidence" value="ECO:0007669"/>
    <property type="project" value="UniProtKB-UniRule"/>
</dbReference>
<dbReference type="GO" id="GO:0039557">
    <property type="term" value="P:symbiont-mediated suppression of host cytoplasmic pattern recognition receptor signaling pathway via inhibition of IRF7 activity"/>
    <property type="evidence" value="ECO:0007669"/>
    <property type="project" value="UniProtKB-UniRule"/>
</dbReference>
<dbReference type="HAMAP" id="MF_04088">
    <property type="entry name" value="ROTA_NSP1"/>
    <property type="match status" value="1"/>
</dbReference>
<dbReference type="InterPro" id="IPR002148">
    <property type="entry name" value="Rotavirus_NSP1"/>
</dbReference>
<dbReference type="Pfam" id="PF00981">
    <property type="entry name" value="Rota_NS53"/>
    <property type="match status" value="1"/>
</dbReference>
<name>NSP1_ROTH3</name>
<protein>
    <recommendedName>
        <fullName evidence="1">Non-structural protein 1</fullName>
        <shortName evidence="1">NSP1</shortName>
    </recommendedName>
    <alternativeName>
        <fullName evidence="1">NCVP2</fullName>
    </alternativeName>
    <alternativeName>
        <fullName evidence="1">Non-structural RNA-binding protein 53</fullName>
        <shortName evidence="1">NS53</shortName>
    </alternativeName>
</protein>
<keyword id="KW-1035">Host cytoplasm</keyword>
<keyword id="KW-1037">Host cytoskeleton</keyword>
<keyword id="KW-0945">Host-virus interaction</keyword>
<keyword id="KW-1090">Inhibition of host innate immune response by virus</keyword>
<keyword id="KW-1092">Inhibition of host IRF3 by virus</keyword>
<keyword id="KW-1093">Inhibition of host IRF7 by virus</keyword>
<keyword id="KW-1113">Inhibition of host RLR pathway by virus</keyword>
<keyword id="KW-0922">Interferon antiviral system evasion</keyword>
<keyword id="KW-0479">Metal-binding</keyword>
<keyword id="KW-0694">RNA-binding</keyword>
<keyword id="KW-0899">Viral immunoevasion</keyword>
<reference key="1">
    <citation type="journal article" date="1995" name="Res. Virol.">
        <title>Distinctness of NSP1 gene of human rotavirus AU-1 from NSP1 gene of other human genogroups.</title>
        <authorList>
            <person name="Nakagomi O."/>
            <person name="Kaga E."/>
        </authorList>
    </citation>
    <scope>NUCLEOTIDE SEQUENCE [MRNA]</scope>
</reference>
<organismHost>
    <name type="scientific">Homo sapiens</name>
    <name type="common">Human</name>
    <dbReference type="NCBI Taxonomy" id="9606"/>
</organismHost>
<proteinExistence type="evidence at transcript level"/>
<feature type="chain" id="PRO_0000369082" description="Non-structural protein 1">
    <location>
        <begin position="1"/>
        <end position="491"/>
    </location>
</feature>
<feature type="region of interest" description="RNA-binding" evidence="1">
    <location>
        <begin position="1"/>
        <end position="81"/>
    </location>
</feature>
<feature type="region of interest" description="Zinc-binding domain" evidence="1">
    <location>
        <begin position="42"/>
        <end position="79"/>
    </location>
</feature>
<feature type="region of interest" description="Important for cytoskeleton localization" evidence="1">
    <location>
        <begin position="82"/>
        <end position="176"/>
    </location>
</feature>
<feature type="region of interest" description="Interaction with host IRF3" evidence="1">
    <location>
        <begin position="320"/>
        <end position="491"/>
    </location>
</feature>
<feature type="short sequence motif" description="pLxIS motif" evidence="1">
    <location>
        <begin position="485"/>
        <end position="488"/>
    </location>
</feature>
<sequence>MATFKDACYHYRRLNKLNNLVLKLGANDEWRPAPVTKYKGWCLDCCQHTNLTYCRGCALYHVCQWCSQYNRCFLDEEPHLLRMRTFKNVMTKEDIEGLLTMYETLFPINEKLVNKFTDFVKQRKCRNEYLLEWYNHLLMPITLQALTVKLEDNIYYICGYYDCMEHENQTPLQFINLLEKYDKLLLDDRNFNRMSYLPTILQQEYALRYFSKSRFFSKKEKRLSRNDFSDNLMEDRHSPISLIQVIRNCISTHMNDSEWNKACTLVVDPKNYIDIINSSYTEHYSVSQRCKLFTKYKLGIVSKLVRPNYIFSSHESCALNVHNCKWCQTNNHYKVWADFRLKKIYNNMMDFVRALTKSNGNVGHCSSQESESKCIPDIFLICEMEKWNGPVRVLFRYLEPVDINGEEYVLLDYEVNWEVRGLIIQNMDGRVPRILNMDDVKKILSAIIFDWFDVRYMRETPLTTLTTNQLRALNRKNELIDEYDLELSDVE</sequence>
<comment type="function">
    <text evidence="1">Plays a role in the inhibition of host innate immunity by inducing the degradation of key host factors required to activate interferon production such as IRF3, IRF5 or IRF7. Associates with components of cullin RING ligases (CRLs) including CUL1 or CUL3, which are essential multisubunit ubiquitination complexes, to modulate their activities.</text>
</comment>
<comment type="subunit">
    <text evidence="1">Interacts (via C-terminus) with host IRF3; this interaction leads to IRF3 degradation. Interacts with host IRF7; this interaction leads to IRF7 degradation. Interacts with host CUL1 and CUL3.</text>
</comment>
<comment type="subcellular location">
    <subcellularLocation>
        <location evidence="1">Host cytoplasm</location>
        <location evidence="1">Host cytoskeleton</location>
    </subcellularLocation>
</comment>
<comment type="domain">
    <text evidence="1">The integrity of the zinc-binding domain in NSP1 is important for degradation of host IRF3.</text>
</comment>
<comment type="domain">
    <text evidence="1">The pLxIS motif targets host IRF3 for degradation; however phosphorylation of NSP1 pLxIS motif is not required for its activity.</text>
</comment>
<comment type="similarity">
    <text evidence="1">Belongs to the rotavirus NSP1 family.</text>
</comment>